<gene>
    <name evidence="1" type="primary">rpoC</name>
    <name type="ordered locus">STM4154</name>
    <name type="ORF">STMF1.13</name>
</gene>
<name>RPOC_SALTY</name>
<feature type="chain" id="PRO_0000067788" description="DNA-directed RNA polymerase subunit beta'">
    <location>
        <begin position="1"/>
        <end position="1407"/>
    </location>
</feature>
<feature type="binding site" evidence="1">
    <location>
        <position position="70"/>
    </location>
    <ligand>
        <name>Zn(2+)</name>
        <dbReference type="ChEBI" id="CHEBI:29105"/>
        <label>1</label>
    </ligand>
</feature>
<feature type="binding site" evidence="1">
    <location>
        <position position="72"/>
    </location>
    <ligand>
        <name>Zn(2+)</name>
        <dbReference type="ChEBI" id="CHEBI:29105"/>
        <label>1</label>
    </ligand>
</feature>
<feature type="binding site" evidence="1">
    <location>
        <position position="85"/>
    </location>
    <ligand>
        <name>Zn(2+)</name>
        <dbReference type="ChEBI" id="CHEBI:29105"/>
        <label>1</label>
    </ligand>
</feature>
<feature type="binding site" evidence="1">
    <location>
        <position position="88"/>
    </location>
    <ligand>
        <name>Zn(2+)</name>
        <dbReference type="ChEBI" id="CHEBI:29105"/>
        <label>1</label>
    </ligand>
</feature>
<feature type="binding site" evidence="1">
    <location>
        <position position="460"/>
    </location>
    <ligand>
        <name>Mg(2+)</name>
        <dbReference type="ChEBI" id="CHEBI:18420"/>
    </ligand>
</feature>
<feature type="binding site" evidence="1">
    <location>
        <position position="462"/>
    </location>
    <ligand>
        <name>Mg(2+)</name>
        <dbReference type="ChEBI" id="CHEBI:18420"/>
    </ligand>
</feature>
<feature type="binding site" evidence="1">
    <location>
        <position position="464"/>
    </location>
    <ligand>
        <name>Mg(2+)</name>
        <dbReference type="ChEBI" id="CHEBI:18420"/>
    </ligand>
</feature>
<feature type="binding site" evidence="1">
    <location>
        <position position="814"/>
    </location>
    <ligand>
        <name>Zn(2+)</name>
        <dbReference type="ChEBI" id="CHEBI:29105"/>
        <label>2</label>
    </ligand>
</feature>
<feature type="binding site" evidence="1">
    <location>
        <position position="888"/>
    </location>
    <ligand>
        <name>Zn(2+)</name>
        <dbReference type="ChEBI" id="CHEBI:29105"/>
        <label>2</label>
    </ligand>
</feature>
<feature type="binding site" evidence="1">
    <location>
        <position position="895"/>
    </location>
    <ligand>
        <name>Zn(2+)</name>
        <dbReference type="ChEBI" id="CHEBI:29105"/>
        <label>2</label>
    </ligand>
</feature>
<feature type="binding site" evidence="1">
    <location>
        <position position="898"/>
    </location>
    <ligand>
        <name>Zn(2+)</name>
        <dbReference type="ChEBI" id="CHEBI:29105"/>
        <label>2</label>
    </ligand>
</feature>
<feature type="mutagenesis site" description="Decreases global transcription rate, 28% decreased growth rate, increased negative supercoiling level." evidence="2">
    <location>
        <begin position="215"/>
        <end position="220"/>
    </location>
</feature>
<dbReference type="EC" id="2.7.7.6" evidence="1"/>
<dbReference type="EMBL" id="AF170176">
    <property type="protein sequence ID" value="AAF33515.1"/>
    <property type="molecule type" value="Genomic_DNA"/>
</dbReference>
<dbReference type="EMBL" id="AE006468">
    <property type="protein sequence ID" value="AAL22982.1"/>
    <property type="molecule type" value="Genomic_DNA"/>
</dbReference>
<dbReference type="RefSeq" id="NP_463023.1">
    <property type="nucleotide sequence ID" value="NC_003197.2"/>
</dbReference>
<dbReference type="RefSeq" id="WP_000653965.1">
    <property type="nucleotide sequence ID" value="NC_003197.2"/>
</dbReference>
<dbReference type="SMR" id="P0A2R4"/>
<dbReference type="STRING" id="99287.STM4154"/>
<dbReference type="PaxDb" id="99287-STM4154"/>
<dbReference type="GeneID" id="1255680"/>
<dbReference type="KEGG" id="stm:STM4154"/>
<dbReference type="PATRIC" id="fig|99287.12.peg.4366"/>
<dbReference type="HOGENOM" id="CLU_000524_3_1_6"/>
<dbReference type="OMA" id="QDMIIGL"/>
<dbReference type="PhylomeDB" id="P0A2R4"/>
<dbReference type="BioCyc" id="SENT99287:STM4154-MONOMER"/>
<dbReference type="Proteomes" id="UP000001014">
    <property type="component" value="Chromosome"/>
</dbReference>
<dbReference type="GO" id="GO:0000428">
    <property type="term" value="C:DNA-directed RNA polymerase complex"/>
    <property type="evidence" value="ECO:0007669"/>
    <property type="project" value="UniProtKB-KW"/>
</dbReference>
<dbReference type="GO" id="GO:0003677">
    <property type="term" value="F:DNA binding"/>
    <property type="evidence" value="ECO:0007669"/>
    <property type="project" value="UniProtKB-UniRule"/>
</dbReference>
<dbReference type="GO" id="GO:0003899">
    <property type="term" value="F:DNA-directed RNA polymerase activity"/>
    <property type="evidence" value="ECO:0007669"/>
    <property type="project" value="UniProtKB-UniRule"/>
</dbReference>
<dbReference type="GO" id="GO:0000287">
    <property type="term" value="F:magnesium ion binding"/>
    <property type="evidence" value="ECO:0007669"/>
    <property type="project" value="UniProtKB-UniRule"/>
</dbReference>
<dbReference type="GO" id="GO:0008270">
    <property type="term" value="F:zinc ion binding"/>
    <property type="evidence" value="ECO:0007669"/>
    <property type="project" value="UniProtKB-UniRule"/>
</dbReference>
<dbReference type="GO" id="GO:0006351">
    <property type="term" value="P:DNA-templated transcription"/>
    <property type="evidence" value="ECO:0007669"/>
    <property type="project" value="UniProtKB-UniRule"/>
</dbReference>
<dbReference type="CDD" id="cd02655">
    <property type="entry name" value="RNAP_beta'_C"/>
    <property type="match status" value="1"/>
</dbReference>
<dbReference type="CDD" id="cd01609">
    <property type="entry name" value="RNAP_beta'_N"/>
    <property type="match status" value="1"/>
</dbReference>
<dbReference type="FunFam" id="1.10.132.30:FF:000003">
    <property type="entry name" value="DNA-directed RNA polymerase subunit beta"/>
    <property type="match status" value="1"/>
</dbReference>
<dbReference type="FunFam" id="1.10.150.390:FF:000002">
    <property type="entry name" value="DNA-directed RNA polymerase subunit beta"/>
    <property type="match status" value="1"/>
</dbReference>
<dbReference type="FunFam" id="1.10.274.100:FF:000002">
    <property type="entry name" value="DNA-directed RNA polymerase subunit beta"/>
    <property type="match status" value="1"/>
</dbReference>
<dbReference type="FunFam" id="1.10.40.90:FF:000001">
    <property type="entry name" value="DNA-directed RNA polymerase subunit beta"/>
    <property type="match status" value="1"/>
</dbReference>
<dbReference type="FunFam" id="2.40.50.100:FF:000012">
    <property type="entry name" value="DNA-directed RNA polymerase subunit beta"/>
    <property type="match status" value="1"/>
</dbReference>
<dbReference type="FunFam" id="2.40.50.100:FF:000016">
    <property type="entry name" value="DNA-directed RNA polymerase subunit beta"/>
    <property type="match status" value="1"/>
</dbReference>
<dbReference type="FunFam" id="2.40.50.100:FF:000019">
    <property type="entry name" value="DNA-directed RNA polymerase subunit beta"/>
    <property type="match status" value="1"/>
</dbReference>
<dbReference type="FunFam" id="4.10.860.120:FF:000001">
    <property type="entry name" value="DNA-directed RNA polymerase subunit beta"/>
    <property type="match status" value="1"/>
</dbReference>
<dbReference type="Gene3D" id="1.10.132.30">
    <property type="match status" value="1"/>
</dbReference>
<dbReference type="Gene3D" id="1.10.150.390">
    <property type="match status" value="1"/>
</dbReference>
<dbReference type="Gene3D" id="1.10.1790.20">
    <property type="match status" value="1"/>
</dbReference>
<dbReference type="Gene3D" id="1.10.40.90">
    <property type="match status" value="1"/>
</dbReference>
<dbReference type="Gene3D" id="2.40.40.20">
    <property type="match status" value="1"/>
</dbReference>
<dbReference type="Gene3D" id="2.40.50.100">
    <property type="match status" value="3"/>
</dbReference>
<dbReference type="Gene3D" id="4.10.860.120">
    <property type="entry name" value="RNA polymerase II, clamp domain"/>
    <property type="match status" value="1"/>
</dbReference>
<dbReference type="Gene3D" id="1.10.274.100">
    <property type="entry name" value="RNA polymerase Rpb1, domain 3"/>
    <property type="match status" value="2"/>
</dbReference>
<dbReference type="HAMAP" id="MF_01322">
    <property type="entry name" value="RNApol_bact_RpoC"/>
    <property type="match status" value="1"/>
</dbReference>
<dbReference type="InterPro" id="IPR045867">
    <property type="entry name" value="DNA-dir_RpoC_beta_prime"/>
</dbReference>
<dbReference type="InterPro" id="IPR012754">
    <property type="entry name" value="DNA-dir_RpoC_beta_prime_bact"/>
</dbReference>
<dbReference type="InterPro" id="IPR000722">
    <property type="entry name" value="RNA_pol_asu"/>
</dbReference>
<dbReference type="InterPro" id="IPR006592">
    <property type="entry name" value="RNA_pol_N"/>
</dbReference>
<dbReference type="InterPro" id="IPR007080">
    <property type="entry name" value="RNA_pol_Rpb1_1"/>
</dbReference>
<dbReference type="InterPro" id="IPR007066">
    <property type="entry name" value="RNA_pol_Rpb1_3"/>
</dbReference>
<dbReference type="InterPro" id="IPR042102">
    <property type="entry name" value="RNA_pol_Rpb1_3_sf"/>
</dbReference>
<dbReference type="InterPro" id="IPR007083">
    <property type="entry name" value="RNA_pol_Rpb1_4"/>
</dbReference>
<dbReference type="InterPro" id="IPR007081">
    <property type="entry name" value="RNA_pol_Rpb1_5"/>
</dbReference>
<dbReference type="InterPro" id="IPR044893">
    <property type="entry name" value="RNA_pol_Rpb1_clamp_domain"/>
</dbReference>
<dbReference type="InterPro" id="IPR038120">
    <property type="entry name" value="Rpb1_funnel_sf"/>
</dbReference>
<dbReference type="NCBIfam" id="TIGR02386">
    <property type="entry name" value="rpoC_TIGR"/>
    <property type="match status" value="1"/>
</dbReference>
<dbReference type="PANTHER" id="PTHR19376">
    <property type="entry name" value="DNA-DIRECTED RNA POLYMERASE"/>
    <property type="match status" value="1"/>
</dbReference>
<dbReference type="PANTHER" id="PTHR19376:SF54">
    <property type="entry name" value="DNA-DIRECTED RNA POLYMERASE SUBUNIT BETA"/>
    <property type="match status" value="1"/>
</dbReference>
<dbReference type="Pfam" id="PF04997">
    <property type="entry name" value="RNA_pol_Rpb1_1"/>
    <property type="match status" value="1"/>
</dbReference>
<dbReference type="Pfam" id="PF00623">
    <property type="entry name" value="RNA_pol_Rpb1_2"/>
    <property type="match status" value="2"/>
</dbReference>
<dbReference type="Pfam" id="PF04983">
    <property type="entry name" value="RNA_pol_Rpb1_3"/>
    <property type="match status" value="1"/>
</dbReference>
<dbReference type="Pfam" id="PF05000">
    <property type="entry name" value="RNA_pol_Rpb1_4"/>
    <property type="match status" value="1"/>
</dbReference>
<dbReference type="Pfam" id="PF04998">
    <property type="entry name" value="RNA_pol_Rpb1_5"/>
    <property type="match status" value="1"/>
</dbReference>
<dbReference type="SMART" id="SM00663">
    <property type="entry name" value="RPOLA_N"/>
    <property type="match status" value="1"/>
</dbReference>
<dbReference type="SUPFAM" id="SSF64484">
    <property type="entry name" value="beta and beta-prime subunits of DNA dependent RNA-polymerase"/>
    <property type="match status" value="1"/>
</dbReference>
<keyword id="KW-0240">DNA-directed RNA polymerase</keyword>
<keyword id="KW-0460">Magnesium</keyword>
<keyword id="KW-0479">Metal-binding</keyword>
<keyword id="KW-0548">Nucleotidyltransferase</keyword>
<keyword id="KW-1185">Reference proteome</keyword>
<keyword id="KW-0804">Transcription</keyword>
<keyword id="KW-0808">Transferase</keyword>
<keyword id="KW-0862">Zinc</keyword>
<reference key="1">
    <citation type="journal article" date="2001" name="Nature">
        <title>Complete genome sequence of Salmonella enterica serovar Typhimurium LT2.</title>
        <authorList>
            <person name="McClelland M."/>
            <person name="Sanderson K.E."/>
            <person name="Spieth J."/>
            <person name="Clifton S.W."/>
            <person name="Latreille P."/>
            <person name="Courtney L."/>
            <person name="Porwollik S."/>
            <person name="Ali J."/>
            <person name="Dante M."/>
            <person name="Du F."/>
            <person name="Hou S."/>
            <person name="Layman D."/>
            <person name="Leonard S."/>
            <person name="Nguyen C."/>
            <person name="Scott K."/>
            <person name="Holmes A."/>
            <person name="Grewal N."/>
            <person name="Mulvaney E."/>
            <person name="Ryan E."/>
            <person name="Sun H."/>
            <person name="Florea L."/>
            <person name="Miller W."/>
            <person name="Stoneking T."/>
            <person name="Nhan M."/>
            <person name="Waterston R."/>
            <person name="Wilson R.K."/>
        </authorList>
    </citation>
    <scope>NUCLEOTIDE SEQUENCE [LARGE SCALE GENOMIC DNA]</scope>
    <source>
        <strain>LT2 / SGSC1412 / ATCC 700720</strain>
    </source>
</reference>
<reference key="2">
    <citation type="journal article" date="2012" name="PLoS Genet.">
        <title>Rates of gyrase supercoiling and transcription elongation control supercoil density in a bacterial chromosome.</title>
        <authorList>
            <person name="Rovinskiy N."/>
            <person name="Agbleke A.A."/>
            <person name="Chesnokova O."/>
            <person name="Pang Z."/>
            <person name="Higgins N.P."/>
        </authorList>
    </citation>
    <scope>FUNCTION</scope>
    <scope>MUTAGENESIS OF 215-LYS--ARG-220</scope>
    <source>
        <strain>LT2 / SGSC1412 / ATCC 700720</strain>
    </source>
</reference>
<sequence length="1407" mass="155234">MKDLLKFLKAQTKTEEFDAIKIALASPDMIRSWSFGEVKKPETINYRTFKPERDGLFCARIFGPVKDYECLCGKYKRLKHRGVICEKCGVEVTQTKVRRERMGHIELASPTAHIWFLKSLPSRIGLLLDMPLRDIERVLYFESYVVIEGGMTNLERQQILTEEQYLDALEEFGDEFDAKMGAEAIQALLKSMDLEQECETLREELNETNSETKRKKLTKRIKLLEAFVQSGNKPEWMILTVLPVLPPDLRPLVPLDGGRFATSDLNDLYRRVINRNNRLKRLLDLAAPDIIVRNEKRMLQEAVDALLDNGRRGRAITGSNKRPLKSLADMIKGKQGRFRQNLLGKRVDYSGRSVITVGPYLRLHQCGLPKKMALELFKPFIYGKLELRGLATTIKAAKKMVEREEAVVWDILDEVIREHPVLLNRAPTLHRLGIQAFEPVLIEGKAIQLHPLVCAAYNADFDGDQMAVHVPLTLEAQLEARALMMSTNNILSPANGEPIIVPSQDVVLGLYYMTRDCVNAKGEGMVLTGPKEAERIYRAGLASLHARVKVRITEYEKDENGEFVAHTSLKDTTVGRAILWMIVPKGLPFSIVNQALGKKAISKMLNTCYRILGLKPTVIFADQTMYTGFAYAARSGASVGIDDMVIPEKKHEIISEAEAEVAEIQEQFQSGLVTAGERYNKVIDIWAAANDRVSKAMMDNLQTETVINRDGQEEQQVSFNSIYMMADSGARGSAAQIRQLAGMRGLMAKPDGSIIETPITANFREGLNVLQYFISTHGARKGLADTALKTANSGYLTRRLVDVAQDLVVTEDDCGTHEGILMTPVIEGGDVKEPLRDRVLGRVTAEDVLKPGTADILVPRNTLLHEQWCDLLEANSVDAVKVRSVVSCDTDFGVCAHCYGRDLARGHIINKGEAIGVIAAQSIGEPGTQLTMRTFHIGGAASRAAAESSIQVKNKGSIKLSNVKSVVNSSGKLVITSRNTELKLIDEFGRTKESYKVPYGAVMAKGDGEQVAGGETVANWDPHTMPVITEVSGFIRFTDMIDGQTITRQTDELTGLSSLVVLDSAERTTGGKDLRPALKIVDAQGNDVLIPGTDMPAQYFLPGKAIVQLEDGVQISSGDTLARIPQESGGTKDITGGLPRVADLFEARRPKEPAILAEIAGIVSFGKETKGKRRLVITPVDGSDPYEEMIPKWRQLNVFEGERVERGDVISDGPEAPHDILRLRGVHAVTRYIVNEVQDVYRLQGVKINDKHIEVIVRQMLRKATIESAGSSDFLEGEQVEYSRVKIANRELEANGKVGATFSRDLLGITKASLATESFISAASFQETTRVLTEAAVAGKRDELRGLKENVIVGRLIPAGTGYAYHQDRMRRRAAGEQPATPQVTAEDASASLAELLNAGLGGSDNE</sequence>
<organism>
    <name type="scientific">Salmonella typhimurium (strain LT2 / SGSC1412 / ATCC 700720)</name>
    <dbReference type="NCBI Taxonomy" id="99287"/>
    <lineage>
        <taxon>Bacteria</taxon>
        <taxon>Pseudomonadati</taxon>
        <taxon>Pseudomonadota</taxon>
        <taxon>Gammaproteobacteria</taxon>
        <taxon>Enterobacterales</taxon>
        <taxon>Enterobacteriaceae</taxon>
        <taxon>Salmonella</taxon>
    </lineage>
</organism>
<evidence type="ECO:0000255" key="1">
    <source>
        <dbReference type="HAMAP-Rule" id="MF_01322"/>
    </source>
</evidence>
<evidence type="ECO:0000269" key="2">
    <source>
    </source>
</evidence>
<proteinExistence type="evidence at protein level"/>
<comment type="function">
    <text evidence="1">DNA-dependent RNA polymerase catalyzes the transcription of DNA into RNA using the four ribonucleoside triphosphates as substrates.</text>
</comment>
<comment type="function">
    <text evidence="2">Chromosomal supercoiling density is controlled by a combination of RNA polymerase and DNA gyrase activity; negative supercoiling increases upstream of transcribed regions while it decreases downstream, DNA gyrase introduces negative supercoils into underwound DNA (PubMed:22916023).</text>
</comment>
<comment type="catalytic activity">
    <reaction evidence="1">
        <text>RNA(n) + a ribonucleoside 5'-triphosphate = RNA(n+1) + diphosphate</text>
        <dbReference type="Rhea" id="RHEA:21248"/>
        <dbReference type="Rhea" id="RHEA-COMP:14527"/>
        <dbReference type="Rhea" id="RHEA-COMP:17342"/>
        <dbReference type="ChEBI" id="CHEBI:33019"/>
        <dbReference type="ChEBI" id="CHEBI:61557"/>
        <dbReference type="ChEBI" id="CHEBI:140395"/>
        <dbReference type="EC" id="2.7.7.6"/>
    </reaction>
</comment>
<comment type="cofactor">
    <cofactor evidence="1">
        <name>Mg(2+)</name>
        <dbReference type="ChEBI" id="CHEBI:18420"/>
    </cofactor>
    <text evidence="1">Binds 1 Mg(2+) ion per subunit.</text>
</comment>
<comment type="cofactor">
    <cofactor evidence="1">
        <name>Zn(2+)</name>
        <dbReference type="ChEBI" id="CHEBI:29105"/>
    </cofactor>
    <text evidence="1">Binds 2 Zn(2+) ions per subunit.</text>
</comment>
<comment type="subunit">
    <text evidence="1">The RNAP catalytic core consists of 2 alpha, 1 beta, 1 beta' and 1 omega subunit. When a sigma factor is associated with the core the holoenzyme is formed, which can initiate transcription.</text>
</comment>
<comment type="similarity">
    <text evidence="1">Belongs to the RNA polymerase beta' chain family.</text>
</comment>
<accession>P0A2R4</accession>
<accession>Q9L9J7</accession>
<protein>
    <recommendedName>
        <fullName evidence="1">DNA-directed RNA polymerase subunit beta'</fullName>
        <shortName evidence="1">RNAP subunit beta'</shortName>
        <ecNumber evidence="1">2.7.7.6</ecNumber>
    </recommendedName>
    <alternativeName>
        <fullName evidence="1">RNA polymerase subunit beta'</fullName>
    </alternativeName>
    <alternativeName>
        <fullName evidence="1">Transcriptase subunit beta'</fullName>
    </alternativeName>
</protein>